<name>TRPB2_PYRFU</name>
<dbReference type="EC" id="4.2.1.20"/>
<dbReference type="EMBL" id="AE009950">
    <property type="protein sequence ID" value="AAL81716.1"/>
    <property type="molecule type" value="Genomic_DNA"/>
</dbReference>
<dbReference type="RefSeq" id="WP_011012738.1">
    <property type="nucleotide sequence ID" value="NZ_CP023154.1"/>
</dbReference>
<dbReference type="SMR" id="Q8U0J5"/>
<dbReference type="STRING" id="186497.PF1592"/>
<dbReference type="PaxDb" id="186497-PF1592"/>
<dbReference type="KEGG" id="pfu:PF1592"/>
<dbReference type="PATRIC" id="fig|186497.12.peg.1658"/>
<dbReference type="eggNOG" id="arCOG01432">
    <property type="taxonomic scope" value="Archaea"/>
</dbReference>
<dbReference type="HOGENOM" id="CLU_042858_1_0_2"/>
<dbReference type="OrthoDB" id="371827at2157"/>
<dbReference type="PhylomeDB" id="Q8U0J5"/>
<dbReference type="UniPathway" id="UPA00035">
    <property type="reaction ID" value="UER00044"/>
</dbReference>
<dbReference type="Proteomes" id="UP000001013">
    <property type="component" value="Chromosome"/>
</dbReference>
<dbReference type="GO" id="GO:0005737">
    <property type="term" value="C:cytoplasm"/>
    <property type="evidence" value="ECO:0007669"/>
    <property type="project" value="TreeGrafter"/>
</dbReference>
<dbReference type="GO" id="GO:0052684">
    <property type="term" value="F:L-serine hydro-lyase (adding indole, L-tryptophan-forming) activity"/>
    <property type="evidence" value="ECO:0007669"/>
    <property type="project" value="TreeGrafter"/>
</dbReference>
<dbReference type="GO" id="GO:0030170">
    <property type="term" value="F:pyridoxal phosphate binding"/>
    <property type="evidence" value="ECO:0007669"/>
    <property type="project" value="InterPro"/>
</dbReference>
<dbReference type="GO" id="GO:0004834">
    <property type="term" value="F:tryptophan synthase activity"/>
    <property type="evidence" value="ECO:0007669"/>
    <property type="project" value="UniProtKB-UniRule"/>
</dbReference>
<dbReference type="CDD" id="cd06446">
    <property type="entry name" value="Trp-synth_B"/>
    <property type="match status" value="1"/>
</dbReference>
<dbReference type="Gene3D" id="3.40.50.1100">
    <property type="match status" value="2"/>
</dbReference>
<dbReference type="HAMAP" id="MF_00133">
    <property type="entry name" value="Trp_synth_beta"/>
    <property type="match status" value="1"/>
</dbReference>
<dbReference type="InterPro" id="IPR006316">
    <property type="entry name" value="Trp_synth_b-like"/>
</dbReference>
<dbReference type="InterPro" id="IPR006653">
    <property type="entry name" value="Trp_synth_b_CS"/>
</dbReference>
<dbReference type="InterPro" id="IPR006654">
    <property type="entry name" value="Trp_synth_beta"/>
</dbReference>
<dbReference type="InterPro" id="IPR023026">
    <property type="entry name" value="Trp_synth_beta/beta-like"/>
</dbReference>
<dbReference type="InterPro" id="IPR001926">
    <property type="entry name" value="TrpB-like_PALP"/>
</dbReference>
<dbReference type="InterPro" id="IPR036052">
    <property type="entry name" value="TrpB-like_PALP_sf"/>
</dbReference>
<dbReference type="NCBIfam" id="NF009057">
    <property type="entry name" value="PRK12391.1"/>
    <property type="match status" value="1"/>
</dbReference>
<dbReference type="NCBIfam" id="TIGR01415">
    <property type="entry name" value="trpB_rel"/>
    <property type="match status" value="1"/>
</dbReference>
<dbReference type="PANTHER" id="PTHR48077:SF6">
    <property type="entry name" value="TRYPTOPHAN SYNTHASE"/>
    <property type="match status" value="1"/>
</dbReference>
<dbReference type="PANTHER" id="PTHR48077">
    <property type="entry name" value="TRYPTOPHAN SYNTHASE-RELATED"/>
    <property type="match status" value="1"/>
</dbReference>
<dbReference type="Pfam" id="PF00291">
    <property type="entry name" value="PALP"/>
    <property type="match status" value="1"/>
</dbReference>
<dbReference type="PIRSF" id="PIRSF001413">
    <property type="entry name" value="Trp_syn_beta"/>
    <property type="match status" value="1"/>
</dbReference>
<dbReference type="PIRSF" id="PIRSF500824">
    <property type="entry name" value="TrpB_prok"/>
    <property type="match status" value="1"/>
</dbReference>
<dbReference type="SUPFAM" id="SSF53686">
    <property type="entry name" value="Tryptophan synthase beta subunit-like PLP-dependent enzymes"/>
    <property type="match status" value="1"/>
</dbReference>
<dbReference type="PROSITE" id="PS00168">
    <property type="entry name" value="TRP_SYNTHASE_BETA"/>
    <property type="match status" value="1"/>
</dbReference>
<accession>Q8U0J5</accession>
<reference key="1">
    <citation type="journal article" date="1999" name="Genetics">
        <title>Divergence of the hyperthermophilic archaea Pyrococcus furiosus and P. horikoshii inferred from complete genomic sequences.</title>
        <authorList>
            <person name="Maeder D.L."/>
            <person name="Weiss R.B."/>
            <person name="Dunn D.M."/>
            <person name="Cherry J.L."/>
            <person name="Gonzalez J.M."/>
            <person name="DiRuggiero J."/>
            <person name="Robb F.T."/>
        </authorList>
    </citation>
    <scope>NUCLEOTIDE SEQUENCE [LARGE SCALE GENOMIC DNA]</scope>
    <source>
        <strain>ATCC 43587 / DSM 3638 / JCM 8422 / Vc1</strain>
    </source>
</reference>
<comment type="function">
    <text evidence="1">The beta subunit is responsible for the synthesis of L-tryptophan from indole and L-serine.</text>
</comment>
<comment type="catalytic activity">
    <reaction>
        <text>(1S,2R)-1-C-(indol-3-yl)glycerol 3-phosphate + L-serine = D-glyceraldehyde 3-phosphate + L-tryptophan + H2O</text>
        <dbReference type="Rhea" id="RHEA:10532"/>
        <dbReference type="ChEBI" id="CHEBI:15377"/>
        <dbReference type="ChEBI" id="CHEBI:33384"/>
        <dbReference type="ChEBI" id="CHEBI:57912"/>
        <dbReference type="ChEBI" id="CHEBI:58866"/>
        <dbReference type="ChEBI" id="CHEBI:59776"/>
        <dbReference type="EC" id="4.2.1.20"/>
    </reaction>
</comment>
<comment type="cofactor">
    <cofactor evidence="1">
        <name>pyridoxal 5'-phosphate</name>
        <dbReference type="ChEBI" id="CHEBI:597326"/>
    </cofactor>
</comment>
<comment type="pathway">
    <text>Amino-acid biosynthesis; L-tryptophan biosynthesis; L-tryptophan from chorismate: step 5/5.</text>
</comment>
<comment type="subunit">
    <text evidence="1">Tetramer of two alpha and two beta chains.</text>
</comment>
<comment type="similarity">
    <text evidence="2">Belongs to the TrpB family.</text>
</comment>
<organism>
    <name type="scientific">Pyrococcus furiosus (strain ATCC 43587 / DSM 3638 / JCM 8422 / Vc1)</name>
    <dbReference type="NCBI Taxonomy" id="186497"/>
    <lineage>
        <taxon>Archaea</taxon>
        <taxon>Methanobacteriati</taxon>
        <taxon>Methanobacteriota</taxon>
        <taxon>Thermococci</taxon>
        <taxon>Thermococcales</taxon>
        <taxon>Thermococcaceae</taxon>
        <taxon>Pyrococcus</taxon>
    </lineage>
</organism>
<gene>
    <name type="primary">trpB2</name>
    <name type="ordered locus">PF1592</name>
</gene>
<proteinExistence type="inferred from homology"/>
<sequence length="446" mass="49616">MKVVLPDGRIPRRWYNILPDLPEPLAPPLDPETNEPVDPKKLERIFAKELVKQEMSTKRYIKIPEEVRKMYSKIGRPTPLFRATNLEKYLNTPARIYFKFEGATVTGSHKINTALAQAYYAKKEGIERLVTETGAGQWGTALSLAGALMGIKVRVYMARASYEQKPYRKVLMRIYGAEVFPSPSENTEIGKRFLSENPNHPGSLGIAISEAIEDVLKDEKARYSLGSVLNHVLMHQTVIGLEAKQQMEEFEEPDVIIGCVGGGSNFAGLAYPFVKEVLDGDNEYEFIAVEPKAAPSMTRGVYTYDFGDSGELTPKLKMHTLGHRYHVPPIHAGGLRYHGVAPTLSVLVNNGIVKPIAYHQTEVFEAAALFAKLEGIVPAPESAHAIKATIDKAIEAKREGKEIVILFNLSGHGLLDLHGYEEYLEGRLQDYEPKDLPISNPLNPKP</sequence>
<keyword id="KW-0028">Amino-acid biosynthesis</keyword>
<keyword id="KW-0057">Aromatic amino acid biosynthesis</keyword>
<keyword id="KW-0456">Lyase</keyword>
<keyword id="KW-0663">Pyridoxal phosphate</keyword>
<keyword id="KW-1185">Reference proteome</keyword>
<keyword id="KW-0822">Tryptophan biosynthesis</keyword>
<feature type="chain" id="PRO_0000099051" description="Tryptophan synthase beta chain 2">
    <location>
        <begin position="1"/>
        <end position="446"/>
    </location>
</feature>
<feature type="modified residue" description="N6-(pyridoxal phosphate)lysine" evidence="1">
    <location>
        <position position="110"/>
    </location>
</feature>
<evidence type="ECO:0000250" key="1"/>
<evidence type="ECO:0000305" key="2"/>
<protein>
    <recommendedName>
        <fullName>Tryptophan synthase beta chain 2</fullName>
        <ecNumber>4.2.1.20</ecNumber>
    </recommendedName>
</protein>